<name>RSMF_ECO45</name>
<comment type="function">
    <text evidence="1">Specifically methylates the cytosine at position 1407 (m5C1407) of 16S rRNA.</text>
</comment>
<comment type="catalytic activity">
    <reaction evidence="1">
        <text>cytidine(1407) in 16S rRNA + S-adenosyl-L-methionine = 5-methylcytidine(1407) in 16S rRNA + S-adenosyl-L-homocysteine + H(+)</text>
        <dbReference type="Rhea" id="RHEA:42756"/>
        <dbReference type="Rhea" id="RHEA-COMP:10223"/>
        <dbReference type="Rhea" id="RHEA-COMP:10224"/>
        <dbReference type="ChEBI" id="CHEBI:15378"/>
        <dbReference type="ChEBI" id="CHEBI:57856"/>
        <dbReference type="ChEBI" id="CHEBI:59789"/>
        <dbReference type="ChEBI" id="CHEBI:74483"/>
        <dbReference type="ChEBI" id="CHEBI:82748"/>
        <dbReference type="EC" id="2.1.1.178"/>
    </reaction>
</comment>
<comment type="subcellular location">
    <subcellularLocation>
        <location evidence="1">Cytoplasm</location>
    </subcellularLocation>
</comment>
<comment type="similarity">
    <text evidence="1">Belongs to the class I-like SAM-binding methyltransferase superfamily. RsmB/NOP family.</text>
</comment>
<gene>
    <name evidence="1" type="primary">rsmF</name>
    <name type="ordered locus">ECS88_1888</name>
</gene>
<reference key="1">
    <citation type="journal article" date="2009" name="PLoS Genet.">
        <title>Organised genome dynamics in the Escherichia coli species results in highly diverse adaptive paths.</title>
        <authorList>
            <person name="Touchon M."/>
            <person name="Hoede C."/>
            <person name="Tenaillon O."/>
            <person name="Barbe V."/>
            <person name="Baeriswyl S."/>
            <person name="Bidet P."/>
            <person name="Bingen E."/>
            <person name="Bonacorsi S."/>
            <person name="Bouchier C."/>
            <person name="Bouvet O."/>
            <person name="Calteau A."/>
            <person name="Chiapello H."/>
            <person name="Clermont O."/>
            <person name="Cruveiller S."/>
            <person name="Danchin A."/>
            <person name="Diard M."/>
            <person name="Dossat C."/>
            <person name="Karoui M.E."/>
            <person name="Frapy E."/>
            <person name="Garry L."/>
            <person name="Ghigo J.M."/>
            <person name="Gilles A.M."/>
            <person name="Johnson J."/>
            <person name="Le Bouguenec C."/>
            <person name="Lescat M."/>
            <person name="Mangenot S."/>
            <person name="Martinez-Jehanne V."/>
            <person name="Matic I."/>
            <person name="Nassif X."/>
            <person name="Oztas S."/>
            <person name="Petit M.A."/>
            <person name="Pichon C."/>
            <person name="Rouy Z."/>
            <person name="Ruf C.S."/>
            <person name="Schneider D."/>
            <person name="Tourret J."/>
            <person name="Vacherie B."/>
            <person name="Vallenet D."/>
            <person name="Medigue C."/>
            <person name="Rocha E.P.C."/>
            <person name="Denamur E."/>
        </authorList>
    </citation>
    <scope>NUCLEOTIDE SEQUENCE [LARGE SCALE GENOMIC DNA]</scope>
    <source>
        <strain>S88 / ExPEC</strain>
    </source>
</reference>
<protein>
    <recommendedName>
        <fullName evidence="1">Ribosomal RNA small subunit methyltransferase F</fullName>
        <ecNumber evidence="1">2.1.1.178</ecNumber>
    </recommendedName>
    <alternativeName>
        <fullName evidence="1">16S rRNA m5C1407 methyltransferase</fullName>
    </alternativeName>
    <alternativeName>
        <fullName evidence="1">rRNA (cytosine-C(5)-)-methyltransferase RsmF</fullName>
    </alternativeName>
</protein>
<feature type="chain" id="PRO_1000147564" description="Ribosomal RNA small subunit methyltransferase F">
    <location>
        <begin position="1"/>
        <end position="479"/>
    </location>
</feature>
<feature type="active site" description="Nucleophile" evidence="1">
    <location>
        <position position="247"/>
    </location>
</feature>
<feature type="binding site" evidence="1">
    <location>
        <begin position="125"/>
        <end position="131"/>
    </location>
    <ligand>
        <name>S-adenosyl-L-methionine</name>
        <dbReference type="ChEBI" id="CHEBI:59789"/>
    </ligand>
</feature>
<feature type="binding site" evidence="1">
    <location>
        <position position="149"/>
    </location>
    <ligand>
        <name>S-adenosyl-L-methionine</name>
        <dbReference type="ChEBI" id="CHEBI:59789"/>
    </ligand>
</feature>
<feature type="binding site" evidence="1">
    <location>
        <position position="176"/>
    </location>
    <ligand>
        <name>S-adenosyl-L-methionine</name>
        <dbReference type="ChEBI" id="CHEBI:59789"/>
    </ligand>
</feature>
<feature type="binding site" evidence="1">
    <location>
        <position position="194"/>
    </location>
    <ligand>
        <name>S-adenosyl-L-methionine</name>
        <dbReference type="ChEBI" id="CHEBI:59789"/>
    </ligand>
</feature>
<sequence length="479" mass="53238">MAQHTVYFPDAFLTQMREAMPSTLSFDDFLAACQRPLRRSIRVNTLKTSVADFLQLTAPYGWTLTPIPWCEEGFWIERDSEDALPLGSTAEHLSGLFYIQEASSMLPVAALFADGNAPQRVMDVAAAPGSKTTQIAARMNNKGAILANEFSASRVKVLHANISRCGISNVALTHFDGRVFGAAVPEMFDAILLDAPCSGEGVVRKDPDALKNWSPESNQEIAATQRELIDSAFHALRLGGTLVYSTCTLNREENEAVCLWLKETYHDAVEFLPLGDLFPGANKALTEDGFLHVFPQIYDCEGFFVARLRKTQAIPVLPAPKYKVGNFPFSPVKDREAGQIRQAAASVGLNWDENLRLWQRDKELWLFPVGIEALIGKVRFSRLGIKLAETHNKGYRWQHEAVIALASPDNVNAFELTPQEAEEWYRGRDVYPQAAPVADDVLVTFQHQPIGLAKRIGSRLKNSYPRELVRDGKLFTGNA</sequence>
<organism>
    <name type="scientific">Escherichia coli O45:K1 (strain S88 / ExPEC)</name>
    <dbReference type="NCBI Taxonomy" id="585035"/>
    <lineage>
        <taxon>Bacteria</taxon>
        <taxon>Pseudomonadati</taxon>
        <taxon>Pseudomonadota</taxon>
        <taxon>Gammaproteobacteria</taxon>
        <taxon>Enterobacterales</taxon>
        <taxon>Enterobacteriaceae</taxon>
        <taxon>Escherichia</taxon>
    </lineage>
</organism>
<evidence type="ECO:0000255" key="1">
    <source>
        <dbReference type="HAMAP-Rule" id="MF_01579"/>
    </source>
</evidence>
<proteinExistence type="inferred from homology"/>
<dbReference type="EC" id="2.1.1.178" evidence="1"/>
<dbReference type="EMBL" id="CU928161">
    <property type="protein sequence ID" value="CAR03194.1"/>
    <property type="molecule type" value="Genomic_DNA"/>
</dbReference>
<dbReference type="RefSeq" id="WP_001350670.1">
    <property type="nucleotide sequence ID" value="NC_011742.1"/>
</dbReference>
<dbReference type="SMR" id="B7MBP2"/>
<dbReference type="KEGG" id="ecz:ECS88_1888"/>
<dbReference type="HOGENOM" id="CLU_005316_6_2_6"/>
<dbReference type="Proteomes" id="UP000000747">
    <property type="component" value="Chromosome"/>
</dbReference>
<dbReference type="GO" id="GO:0005737">
    <property type="term" value="C:cytoplasm"/>
    <property type="evidence" value="ECO:0007669"/>
    <property type="project" value="UniProtKB-SubCell"/>
</dbReference>
<dbReference type="GO" id="GO:0003723">
    <property type="term" value="F:RNA binding"/>
    <property type="evidence" value="ECO:0007669"/>
    <property type="project" value="UniProtKB-KW"/>
</dbReference>
<dbReference type="GO" id="GO:0009383">
    <property type="term" value="F:rRNA (cytosine-C5-)-methyltransferase activity"/>
    <property type="evidence" value="ECO:0007669"/>
    <property type="project" value="TreeGrafter"/>
</dbReference>
<dbReference type="GO" id="GO:0070475">
    <property type="term" value="P:rRNA base methylation"/>
    <property type="evidence" value="ECO:0007669"/>
    <property type="project" value="TreeGrafter"/>
</dbReference>
<dbReference type="FunFam" id="3.10.450.720:FF:000001">
    <property type="entry name" value="Ribosomal RNA small subunit methyltransferase F"/>
    <property type="match status" value="1"/>
</dbReference>
<dbReference type="FunFam" id="3.40.50.150:FF:000079">
    <property type="entry name" value="Ribosomal RNA small subunit methyltransferase F"/>
    <property type="match status" value="1"/>
</dbReference>
<dbReference type="Gene3D" id="3.10.450.720">
    <property type="match status" value="1"/>
</dbReference>
<dbReference type="Gene3D" id="3.40.50.150">
    <property type="entry name" value="Vaccinia Virus protein VP39"/>
    <property type="match status" value="1"/>
</dbReference>
<dbReference type="HAMAP" id="MF_01579">
    <property type="entry name" value="16SrRNA_methyltr_F"/>
    <property type="match status" value="1"/>
</dbReference>
<dbReference type="InterPro" id="IPR031341">
    <property type="entry name" value="Methyltr_RsmF_N"/>
</dbReference>
<dbReference type="InterPro" id="IPR049560">
    <property type="entry name" value="MeTrfase_RsmB-F_NOP2_cat"/>
</dbReference>
<dbReference type="InterPro" id="IPR001678">
    <property type="entry name" value="MeTrfase_RsmB-F_NOP2_dom"/>
</dbReference>
<dbReference type="InterPro" id="IPR027391">
    <property type="entry name" value="Nol1_Nop2_Fmu_2"/>
</dbReference>
<dbReference type="InterPro" id="IPR011023">
    <property type="entry name" value="Nop2p"/>
</dbReference>
<dbReference type="InterPro" id="IPR023267">
    <property type="entry name" value="RCMT"/>
</dbReference>
<dbReference type="InterPro" id="IPR023545">
    <property type="entry name" value="rRNA_ssu_MeTfrase_F"/>
</dbReference>
<dbReference type="InterPro" id="IPR018314">
    <property type="entry name" value="RsmB/NOL1/NOP2-like_CS"/>
</dbReference>
<dbReference type="InterPro" id="IPR029063">
    <property type="entry name" value="SAM-dependent_MTases_sf"/>
</dbReference>
<dbReference type="InterPro" id="IPR048457">
    <property type="entry name" value="YebU_pre-PUA_dom"/>
</dbReference>
<dbReference type="NCBIfam" id="TIGR00446">
    <property type="entry name" value="nop2p"/>
    <property type="match status" value="1"/>
</dbReference>
<dbReference type="NCBIfam" id="NF008898">
    <property type="entry name" value="PRK11933.1"/>
    <property type="match status" value="1"/>
</dbReference>
<dbReference type="PANTHER" id="PTHR22807:SF30">
    <property type="entry name" value="28S RRNA (CYTOSINE(4447)-C(5))-METHYLTRANSFERASE-RELATED"/>
    <property type="match status" value="1"/>
</dbReference>
<dbReference type="PANTHER" id="PTHR22807">
    <property type="entry name" value="NOP2 YEAST -RELATED NOL1/NOP2/FMU SUN DOMAIN-CONTAINING"/>
    <property type="match status" value="1"/>
</dbReference>
<dbReference type="Pfam" id="PF01189">
    <property type="entry name" value="Methyltr_RsmB-F"/>
    <property type="match status" value="1"/>
</dbReference>
<dbReference type="Pfam" id="PF17125">
    <property type="entry name" value="Methyltr_RsmF_N"/>
    <property type="match status" value="1"/>
</dbReference>
<dbReference type="Pfam" id="PF13636">
    <property type="entry name" value="Methyltranf_PUA"/>
    <property type="match status" value="1"/>
</dbReference>
<dbReference type="Pfam" id="PF21150">
    <property type="entry name" value="YebU_pre-PUA_dom"/>
    <property type="match status" value="1"/>
</dbReference>
<dbReference type="PRINTS" id="PR02008">
    <property type="entry name" value="RCMTFAMILY"/>
</dbReference>
<dbReference type="SUPFAM" id="SSF53335">
    <property type="entry name" value="S-adenosyl-L-methionine-dependent methyltransferases"/>
    <property type="match status" value="1"/>
</dbReference>
<dbReference type="PROSITE" id="PS01153">
    <property type="entry name" value="NOL1_NOP2_SUN"/>
    <property type="match status" value="1"/>
</dbReference>
<dbReference type="PROSITE" id="PS51686">
    <property type="entry name" value="SAM_MT_RSMB_NOP"/>
    <property type="match status" value="1"/>
</dbReference>
<keyword id="KW-0963">Cytoplasm</keyword>
<keyword id="KW-0489">Methyltransferase</keyword>
<keyword id="KW-1185">Reference proteome</keyword>
<keyword id="KW-0694">RNA-binding</keyword>
<keyword id="KW-0698">rRNA processing</keyword>
<keyword id="KW-0949">S-adenosyl-L-methionine</keyword>
<keyword id="KW-0808">Transferase</keyword>
<accession>B7MBP2</accession>